<proteinExistence type="evidence at transcript level"/>
<evidence type="ECO:0000250" key="1">
    <source>
        <dbReference type="UniProtKB" id="P04798"/>
    </source>
</evidence>
<evidence type="ECO:0000255" key="2"/>
<evidence type="ECO:0000269" key="3">
    <source>
    </source>
</evidence>
<evidence type="ECO:0000303" key="4">
    <source>
    </source>
</evidence>
<evidence type="ECO:0000305" key="5"/>
<evidence type="ECO:0000305" key="6">
    <source>
    </source>
</evidence>
<evidence type="ECO:0000305" key="7">
    <source>
    </source>
</evidence>
<reference key="1">
    <citation type="journal article" date="2017" name="J. Am. Chem. Soc.">
        <title>Collaborative Biosynthesis of Maleimide- and Succinimide-Containing Natural Products by Fungal Polyketide Megasynthases.</title>
        <authorList>
            <person name="Sato M."/>
            <person name="Dander J.E."/>
            <person name="Sato C."/>
            <person name="Hung Y.S."/>
            <person name="Gao S.S."/>
            <person name="Tang M.C."/>
            <person name="Hang L."/>
            <person name="Winter J.M."/>
            <person name="Garg N.K."/>
            <person name="Watanabe K."/>
            <person name="Tang Y."/>
        </authorList>
    </citation>
    <scope>NUCLEOTIDE SEQUENCE [GENOMIC DNA]</scope>
    <scope>FUNCTION</scope>
    <scope>INDUCTION</scope>
    <scope>PATHWAY</scope>
    <source>
        <strain>K85</strain>
    </source>
</reference>
<reference key="2">
    <citation type="journal article" date="2020" name="Chem. Commun. (Camb.)">
        <title>Evidence for enzyme catalysed intramolecular [4+2] Diels-Alder cyclization during the biosynthesis of pyrichalasin H.</title>
        <authorList>
            <person name="Hantke V."/>
            <person name="Skellam E.J."/>
            <person name="Cox R.J."/>
        </authorList>
    </citation>
    <scope>FUNCTION</scope>
</reference>
<dbReference type="EC" id="1.-.-.-" evidence="6"/>
<dbReference type="EMBL" id="KY764293">
    <property type="protein sequence ID" value="ARF05978.1"/>
    <property type="molecule type" value="Genomic_DNA"/>
</dbReference>
<dbReference type="SMR" id="A0A1W5T1T6"/>
<dbReference type="GO" id="GO:0016020">
    <property type="term" value="C:membrane"/>
    <property type="evidence" value="ECO:0007669"/>
    <property type="project" value="UniProtKB-SubCell"/>
</dbReference>
<dbReference type="GO" id="GO:0020037">
    <property type="term" value="F:heme binding"/>
    <property type="evidence" value="ECO:0007669"/>
    <property type="project" value="InterPro"/>
</dbReference>
<dbReference type="GO" id="GO:0005506">
    <property type="term" value="F:iron ion binding"/>
    <property type="evidence" value="ECO:0007669"/>
    <property type="project" value="InterPro"/>
</dbReference>
<dbReference type="GO" id="GO:0016705">
    <property type="term" value="F:oxidoreductase activity, acting on paired donors, with incorporation or reduction of molecular oxygen"/>
    <property type="evidence" value="ECO:0007669"/>
    <property type="project" value="InterPro"/>
</dbReference>
<dbReference type="GO" id="GO:0008395">
    <property type="term" value="F:steroid hydroxylase activity"/>
    <property type="evidence" value="ECO:0007669"/>
    <property type="project" value="TreeGrafter"/>
</dbReference>
<dbReference type="GO" id="GO:0043386">
    <property type="term" value="P:mycotoxin biosynthetic process"/>
    <property type="evidence" value="ECO:0007669"/>
    <property type="project" value="UniProtKB-ARBA"/>
</dbReference>
<dbReference type="CDD" id="cd11040">
    <property type="entry name" value="CYP7_CYP8-like"/>
    <property type="match status" value="1"/>
</dbReference>
<dbReference type="Gene3D" id="1.10.630.10">
    <property type="entry name" value="Cytochrome P450"/>
    <property type="match status" value="1"/>
</dbReference>
<dbReference type="InterPro" id="IPR050529">
    <property type="entry name" value="CYP450_sterol_14alpha_dmase"/>
</dbReference>
<dbReference type="InterPro" id="IPR001128">
    <property type="entry name" value="Cyt_P450"/>
</dbReference>
<dbReference type="InterPro" id="IPR017972">
    <property type="entry name" value="Cyt_P450_CS"/>
</dbReference>
<dbReference type="InterPro" id="IPR002403">
    <property type="entry name" value="Cyt_P450_E_grp-IV"/>
</dbReference>
<dbReference type="InterPro" id="IPR036396">
    <property type="entry name" value="Cyt_P450_sf"/>
</dbReference>
<dbReference type="PANTHER" id="PTHR24304:SF2">
    <property type="entry name" value="24-HYDROXYCHOLESTEROL 7-ALPHA-HYDROXYLASE"/>
    <property type="match status" value="1"/>
</dbReference>
<dbReference type="PANTHER" id="PTHR24304">
    <property type="entry name" value="CYTOCHROME P450 FAMILY 7"/>
    <property type="match status" value="1"/>
</dbReference>
<dbReference type="Pfam" id="PF00067">
    <property type="entry name" value="p450"/>
    <property type="match status" value="1"/>
</dbReference>
<dbReference type="PRINTS" id="PR00465">
    <property type="entry name" value="EP450IV"/>
</dbReference>
<dbReference type="SUPFAM" id="SSF48264">
    <property type="entry name" value="Cytochrome P450"/>
    <property type="match status" value="1"/>
</dbReference>
<dbReference type="PROSITE" id="PS00086">
    <property type="entry name" value="CYTOCHROME_P450"/>
    <property type="match status" value="1"/>
</dbReference>
<keyword id="KW-0349">Heme</keyword>
<keyword id="KW-0408">Iron</keyword>
<keyword id="KW-0472">Membrane</keyword>
<keyword id="KW-0479">Metal-binding</keyword>
<keyword id="KW-0503">Monooxygenase</keyword>
<keyword id="KW-0560">Oxidoreductase</keyword>
<keyword id="KW-0812">Transmembrane</keyword>
<keyword id="KW-1133">Transmembrane helix</keyword>
<feature type="chain" id="PRO_0000453763" description="Cytochrome P450 monooxygenase poxD">
    <location>
        <begin position="1"/>
        <end position="484"/>
    </location>
</feature>
<feature type="transmembrane region" description="Helical" evidence="2">
    <location>
        <begin position="2"/>
        <end position="24"/>
    </location>
</feature>
<feature type="binding site" description="axial binding residue" evidence="1">
    <location>
        <position position="429"/>
    </location>
    <ligand>
        <name>heme</name>
        <dbReference type="ChEBI" id="CHEBI:30413"/>
    </ligand>
    <ligandPart>
        <name>Fe</name>
        <dbReference type="ChEBI" id="CHEBI:18248"/>
    </ligandPart>
</feature>
<name>POXD_PENOX</name>
<comment type="function">
    <text evidence="3 7">Cytochrome P450 monooxygenase; part of the gene cluster that mediates the biosynthesis of oxaleimides, cytotoxic compounds containing an unusual disubstituted succinimide moiety (PubMed:28365998). The first step of the pathway is provided by the HR-PKS poxF that serves in a new mode of collaborative biosynthesis with the PKS-NRPS poxE, by providing the olefin containing amino acid substrate via the synthesis of an ACP-bound dec-4-enoate (PubMed:28365998). The cytochrome P450 monooxygenase poxM-catalyzed oxidation at the alpha-position creates the enzyme-bound 2-hydroxydec-4-enoyl-ACP thioester, which may be prone to spontaneous hydrolysis to yield 2-hydroxydec-4-enoic acid due to increased electrophilicity of the carbonyl (PubMed:28365998). 2-hydroxydec-4-enoic acid can then be further oxidized by poxM to yield the alpha-ketoacid 2-oxodec-4-enoicacid, which is reductively aminated by the aminotransferase poxL to yield (S,E)-2-aminodec-4-enoic acid (PubMed:28365998). The Hybrid PKS-NRPS synthetase poxE then performs condensation between the octaketide product of its PKS modules and the amino group of (S,E)-2-aminodec-4-enoic acid which is activated and incorporated by the adenylation domain (PubMed:28365998). The resulting aminoacyl product can be cyclized by the Diels-Alderase PoxQ and reductively released by the reductive (R) domain of poxE to yield an aldehyde intermediate (Probable) (PubMed:28365998). The released aldehyde is then substrate for a Knoevenagel condensation by the hydrolyase poxO followed by an oxidation at the 5-position of the pyrrolidone ring (PubMed:28365998). The presence of the olefin from the amino acid building block allows for migration of the substituted allyl group to occur (PubMed:28365998). This allylic transposition reaction takes place in a conjugate addition, semipinacol-like fashion to yield a succinimide intermediate (PubMed:28365998). Iterative two-electron oxidations of the C7 methyl of the succinimide intermediate to the carboxylic acid can be catalyzed by one of two remaining cytochrome P450 monooxygenasess poxC or poxD to yield oxaleimide A (PubMed:28365998). Subsequent oxidation yields the maleimide scaffold oxaleimide I (PubMed:28365998). Both oxaleimide A and oxaleimide I can undergo oxidative modifications in the decalin ring to yield the series of products oxaleimides B to H (PubMed:28365998).</text>
</comment>
<comment type="cofactor">
    <cofactor evidence="1">
        <name>heme</name>
        <dbReference type="ChEBI" id="CHEBI:30413"/>
    </cofactor>
</comment>
<comment type="pathway">
    <text evidence="6">Secondary metabolite biosynthesis.</text>
</comment>
<comment type="subcellular location">
    <subcellularLocation>
        <location evidence="2">Membrane</location>
        <topology evidence="2">Single-pass membrane protein</topology>
    </subcellularLocation>
</comment>
<comment type="induction">
    <text evidence="3">Expression is positively regulated by the oxaleimides biosynthesis cluster-specific transcription factor poxB.</text>
</comment>
<comment type="similarity">
    <text evidence="5">Belongs to the cytochrome P450 family.</text>
</comment>
<sequence>MVSPVVLATTAMIVVFLLAQRYLSLPVLPNEPLLIPHWMPFFGHAFRFARSKRSFFRWANAKTGGQPFSVPMGGRRHYIFSDPADIAGIHKNGKTLSIRGFVRFIYISIWGFKPADADAMWEIKPEWHRMDIEWLLSDKNDQIAVQYLRRIEEQLRALDAEVEGAPDKAIVRPGLKTVVDVQGKATCQVLYGATTLEKHPGLLDDLTIMVRDGFWGLLFRAPRFLFRNAYEARDRIINTYADLVENIETRKDVSQYLYERTVYLTQQGISPQAQGADMLRTMFASLLNSMPTGYLALLHILAEPGLADEVRKELIDCGYLERSPEEMLEILPGKMPLLRSIWHETLRMHNNSLTVREVTADTKFMGKTKWQVQKGGVINIPCGLMHFNEALHPDPESFHARRFMDKELGGEGESHARTTKPFGGGSTHCPGRVFAEKQMIGLVAALLMRYDMGIVNADWKMPLVSEFDDITKQPTVWIRISKRV</sequence>
<protein>
    <recommendedName>
        <fullName evidence="4">Cytochrome P450 monooxygenase poxD</fullName>
        <ecNumber evidence="6">1.-.-.-</ecNumber>
    </recommendedName>
    <alternativeName>
        <fullName evidence="4">Oxaleimides biosynthesis cluster protein D</fullName>
    </alternativeName>
</protein>
<accession>A0A1W5T1T6</accession>
<organism>
    <name type="scientific">Penicillium oxalicum</name>
    <dbReference type="NCBI Taxonomy" id="69781"/>
    <lineage>
        <taxon>Eukaryota</taxon>
        <taxon>Fungi</taxon>
        <taxon>Dikarya</taxon>
        <taxon>Ascomycota</taxon>
        <taxon>Pezizomycotina</taxon>
        <taxon>Eurotiomycetes</taxon>
        <taxon>Eurotiomycetidae</taxon>
        <taxon>Eurotiales</taxon>
        <taxon>Aspergillaceae</taxon>
        <taxon>Penicillium</taxon>
    </lineage>
</organism>
<gene>
    <name evidence="4" type="primary">poxD</name>
</gene>